<dbReference type="EC" id="2.3.1.89" evidence="1"/>
<dbReference type="EMBL" id="CP000255">
    <property type="protein sequence ID" value="ABD22494.1"/>
    <property type="molecule type" value="Genomic_DNA"/>
</dbReference>
<dbReference type="SMR" id="Q2FH41"/>
<dbReference type="KEGG" id="saa:SAUSA300_1290"/>
<dbReference type="HOGENOM" id="CLU_103751_0_0_9"/>
<dbReference type="OMA" id="KHCHIGA"/>
<dbReference type="UniPathway" id="UPA00034">
    <property type="reaction ID" value="UER00022"/>
</dbReference>
<dbReference type="Proteomes" id="UP000001939">
    <property type="component" value="Chromosome"/>
</dbReference>
<dbReference type="GO" id="GO:0047200">
    <property type="term" value="F:tetrahydrodipicolinate N-acetyltransferase activity"/>
    <property type="evidence" value="ECO:0007669"/>
    <property type="project" value="UniProtKB-EC"/>
</dbReference>
<dbReference type="GO" id="GO:0019877">
    <property type="term" value="P:diaminopimelate biosynthetic process"/>
    <property type="evidence" value="ECO:0007669"/>
    <property type="project" value="UniProtKB-UniRule"/>
</dbReference>
<dbReference type="GO" id="GO:0009089">
    <property type="term" value="P:lysine biosynthetic process via diaminopimelate"/>
    <property type="evidence" value="ECO:0007669"/>
    <property type="project" value="UniProtKB-UniRule"/>
</dbReference>
<dbReference type="CDD" id="cd03350">
    <property type="entry name" value="LbH_THP_succinylT"/>
    <property type="match status" value="1"/>
</dbReference>
<dbReference type="Gene3D" id="2.160.10.10">
    <property type="entry name" value="Hexapeptide repeat proteins"/>
    <property type="match status" value="1"/>
</dbReference>
<dbReference type="Gene3D" id="3.30.70.250">
    <property type="entry name" value="Malonyl-CoA ACP transacylase, ACP-binding"/>
    <property type="match status" value="1"/>
</dbReference>
<dbReference type="HAMAP" id="MF_01691">
    <property type="entry name" value="DapH"/>
    <property type="match status" value="1"/>
</dbReference>
<dbReference type="InterPro" id="IPR019873">
    <property type="entry name" value="DapH"/>
</dbReference>
<dbReference type="InterPro" id="IPR013710">
    <property type="entry name" value="DapH_N"/>
</dbReference>
<dbReference type="InterPro" id="IPR001451">
    <property type="entry name" value="Hexapep"/>
</dbReference>
<dbReference type="InterPro" id="IPR018357">
    <property type="entry name" value="Hexapep_transf_CS"/>
</dbReference>
<dbReference type="InterPro" id="IPR050179">
    <property type="entry name" value="Trans_hexapeptide_repeat"/>
</dbReference>
<dbReference type="InterPro" id="IPR011004">
    <property type="entry name" value="Trimer_LpxA-like_sf"/>
</dbReference>
<dbReference type="NCBIfam" id="TIGR03532">
    <property type="entry name" value="DapD_Ac"/>
    <property type="match status" value="1"/>
</dbReference>
<dbReference type="PANTHER" id="PTHR43300:SF10">
    <property type="entry name" value="2,3,4,5-TETRAHYDROPYRIDINE-2,6-DICARBOXYLATE N-ACETYLTRANSFERASE"/>
    <property type="match status" value="1"/>
</dbReference>
<dbReference type="PANTHER" id="PTHR43300">
    <property type="entry name" value="ACETYLTRANSFERASE"/>
    <property type="match status" value="1"/>
</dbReference>
<dbReference type="Pfam" id="PF08503">
    <property type="entry name" value="DapH_N"/>
    <property type="match status" value="1"/>
</dbReference>
<dbReference type="Pfam" id="PF00132">
    <property type="entry name" value="Hexapep"/>
    <property type="match status" value="1"/>
</dbReference>
<dbReference type="Pfam" id="PF14602">
    <property type="entry name" value="Hexapep_2"/>
    <property type="match status" value="1"/>
</dbReference>
<dbReference type="SUPFAM" id="SSF51161">
    <property type="entry name" value="Trimeric LpxA-like enzymes"/>
    <property type="match status" value="1"/>
</dbReference>
<dbReference type="PROSITE" id="PS00101">
    <property type="entry name" value="HEXAPEP_TRANSFERASES"/>
    <property type="match status" value="1"/>
</dbReference>
<feature type="chain" id="PRO_0000376700" description="2,3,4,5-tetrahydropyridine-2,6-dicarboxylate N-acetyltransferase">
    <location>
        <begin position="1"/>
        <end position="239"/>
    </location>
</feature>
<organism>
    <name type="scientific">Staphylococcus aureus (strain USA300)</name>
    <dbReference type="NCBI Taxonomy" id="367830"/>
    <lineage>
        <taxon>Bacteria</taxon>
        <taxon>Bacillati</taxon>
        <taxon>Bacillota</taxon>
        <taxon>Bacilli</taxon>
        <taxon>Bacillales</taxon>
        <taxon>Staphylococcaceae</taxon>
        <taxon>Staphylococcus</taxon>
    </lineage>
</organism>
<sequence>MVQHLTAEEIIQYISDAKKSTPIKVYLNGNFEGITYPESFKVFGSEQSKVIFCEADDWKPFYEAYGSQFEDIEIEMDRRNSAIPLKDLTNTNARIEPGAFIREQAIIEDGAVVMMGATINIGAVVGEGTMIDMNATLGGRATTGKNVHVGAGAVLAGVIEPPSASPVIIEDDVLIGANAVILEGVRVGKGAIVAAGAIVTQDVPAGAVVAGTPAKVIKQASEVQDTKKEIVAALRKLND</sequence>
<proteinExistence type="inferred from homology"/>
<comment type="function">
    <text evidence="1">Catalyzes the transfer of an acetyl group from acetyl-CoA to tetrahydrodipicolinate.</text>
</comment>
<comment type="catalytic activity">
    <reaction evidence="1">
        <text>(S)-2,3,4,5-tetrahydrodipicolinate + acetyl-CoA + H2O = L-2-acetamido-6-oxoheptanedioate + CoA</text>
        <dbReference type="Rhea" id="RHEA:13085"/>
        <dbReference type="ChEBI" id="CHEBI:15377"/>
        <dbReference type="ChEBI" id="CHEBI:16845"/>
        <dbReference type="ChEBI" id="CHEBI:57287"/>
        <dbReference type="ChEBI" id="CHEBI:57288"/>
        <dbReference type="ChEBI" id="CHEBI:58117"/>
        <dbReference type="EC" id="2.3.1.89"/>
    </reaction>
</comment>
<comment type="pathway">
    <text evidence="1">Amino-acid biosynthesis; L-lysine biosynthesis via DAP pathway; LL-2,6-diaminopimelate from (S)-tetrahydrodipicolinate (acetylase route): step 1/3.</text>
</comment>
<comment type="similarity">
    <text evidence="1">Belongs to the transferase hexapeptide repeat family. DapH subfamily.</text>
</comment>
<name>DAPH_STAA3</name>
<evidence type="ECO:0000255" key="1">
    <source>
        <dbReference type="HAMAP-Rule" id="MF_01691"/>
    </source>
</evidence>
<keyword id="KW-0012">Acyltransferase</keyword>
<keyword id="KW-0028">Amino-acid biosynthesis</keyword>
<keyword id="KW-0220">Diaminopimelate biosynthesis</keyword>
<keyword id="KW-0457">Lysine biosynthesis</keyword>
<keyword id="KW-0677">Repeat</keyword>
<keyword id="KW-0808">Transferase</keyword>
<gene>
    <name evidence="1" type="primary">dapH</name>
    <name type="ordered locus">SAUSA300_1290</name>
</gene>
<accession>Q2FH41</accession>
<protein>
    <recommendedName>
        <fullName evidence="1">2,3,4,5-tetrahydropyridine-2,6-dicarboxylate N-acetyltransferase</fullName>
        <ecNumber evidence="1">2.3.1.89</ecNumber>
    </recommendedName>
    <alternativeName>
        <fullName evidence="1">Tetrahydrodipicolinate N-acetyltransferase</fullName>
        <shortName evidence="1">THP acetyltransferase</shortName>
        <shortName evidence="1">Tetrahydropicolinate acetylase</shortName>
    </alternativeName>
</protein>
<reference key="1">
    <citation type="journal article" date="2006" name="Lancet">
        <title>Complete genome sequence of USA300, an epidemic clone of community-acquired meticillin-resistant Staphylococcus aureus.</title>
        <authorList>
            <person name="Diep B.A."/>
            <person name="Gill S.R."/>
            <person name="Chang R.F."/>
            <person name="Phan T.H."/>
            <person name="Chen J.H."/>
            <person name="Davidson M.G."/>
            <person name="Lin F."/>
            <person name="Lin J."/>
            <person name="Carleton H.A."/>
            <person name="Mongodin E.F."/>
            <person name="Sensabaugh G.F."/>
            <person name="Perdreau-Remington F."/>
        </authorList>
    </citation>
    <scope>NUCLEOTIDE SEQUENCE [LARGE SCALE GENOMIC DNA]</scope>
    <source>
        <strain>USA300</strain>
    </source>
</reference>